<protein>
    <recommendedName>
        <fullName evidence="1">Argininosuccinate synthase</fullName>
        <ecNumber evidence="1">6.3.4.5</ecNumber>
    </recommendedName>
    <alternativeName>
        <fullName evidence="1">Citrulline--aspartate ligase</fullName>
    </alternativeName>
</protein>
<gene>
    <name evidence="1" type="primary">argG</name>
    <name type="ordered locus">YpsIP31758_2408</name>
</gene>
<sequence length="455" mass="51009">MTTILKHLPINQRVGIAFSGGLDTSAALLWMQKKGAIPYAYTANLGQPDEEDYEAIPRKAMEYGAEKARLIDCRKQLVAEGIAAIQCGAFHNTTAGVTYFNTTPLGRAVTGTMLVAAMKEDDVNIWGDGSTYKGNDIERFYRYGLLTNAELKIYKPWLDTDFIDELGGRHEMSEFMIQSGFDYKMSTEKAYSTDSNMLGATHEAKDLEFLNSSVKIVNPIMGVKFWDENVVVKAEEVTVRFERGYPVALNGVVFDDSVELMMEANRIGGRHGLGMSDQIENRIIEAKSRGIYEAPGMALLHIAYERLLTGIHNEDTIEQYHANGRVLGRLLYQGRWFDPQALMLRDSIQRWVASEITGEVTLELRRGNDYSILNTVSDNLTYKPERLTMEKGDSVFSPDDRIGQLTMRNLDITDTREKLFNYVETGLLTSSAATGLPQVDNNNLSSGRGLQDKRQ</sequence>
<keyword id="KW-0028">Amino-acid biosynthesis</keyword>
<keyword id="KW-0055">Arginine biosynthesis</keyword>
<keyword id="KW-0067">ATP-binding</keyword>
<keyword id="KW-0963">Cytoplasm</keyword>
<keyword id="KW-0436">Ligase</keyword>
<keyword id="KW-0547">Nucleotide-binding</keyword>
<dbReference type="EC" id="6.3.4.5" evidence="1"/>
<dbReference type="EMBL" id="CP000720">
    <property type="protein sequence ID" value="ABS49015.1"/>
    <property type="molecule type" value="Genomic_DNA"/>
</dbReference>
<dbReference type="RefSeq" id="WP_002211920.1">
    <property type="nucleotide sequence ID" value="NC_009708.1"/>
</dbReference>
<dbReference type="SMR" id="A7FJE9"/>
<dbReference type="GeneID" id="96665184"/>
<dbReference type="KEGG" id="ypi:YpsIP31758_2408"/>
<dbReference type="HOGENOM" id="CLU_032784_4_1_6"/>
<dbReference type="UniPathway" id="UPA00068">
    <property type="reaction ID" value="UER00113"/>
</dbReference>
<dbReference type="Proteomes" id="UP000002412">
    <property type="component" value="Chromosome"/>
</dbReference>
<dbReference type="GO" id="GO:0005737">
    <property type="term" value="C:cytoplasm"/>
    <property type="evidence" value="ECO:0007669"/>
    <property type="project" value="UniProtKB-SubCell"/>
</dbReference>
<dbReference type="GO" id="GO:0004055">
    <property type="term" value="F:argininosuccinate synthase activity"/>
    <property type="evidence" value="ECO:0007669"/>
    <property type="project" value="UniProtKB-UniRule"/>
</dbReference>
<dbReference type="GO" id="GO:0005524">
    <property type="term" value="F:ATP binding"/>
    <property type="evidence" value="ECO:0007669"/>
    <property type="project" value="UniProtKB-UniRule"/>
</dbReference>
<dbReference type="GO" id="GO:0042803">
    <property type="term" value="F:protein homodimerization activity"/>
    <property type="evidence" value="ECO:0007669"/>
    <property type="project" value="InterPro"/>
</dbReference>
<dbReference type="GO" id="GO:0000053">
    <property type="term" value="P:argininosuccinate metabolic process"/>
    <property type="evidence" value="ECO:0007669"/>
    <property type="project" value="TreeGrafter"/>
</dbReference>
<dbReference type="GO" id="GO:0006526">
    <property type="term" value="P:L-arginine biosynthetic process"/>
    <property type="evidence" value="ECO:0007669"/>
    <property type="project" value="UniProtKB-UniRule"/>
</dbReference>
<dbReference type="GO" id="GO:0000050">
    <property type="term" value="P:urea cycle"/>
    <property type="evidence" value="ECO:0007669"/>
    <property type="project" value="TreeGrafter"/>
</dbReference>
<dbReference type="CDD" id="cd01999">
    <property type="entry name" value="ASS"/>
    <property type="match status" value="1"/>
</dbReference>
<dbReference type="FunFam" id="1.10.287.400:FF:000001">
    <property type="entry name" value="Argininosuccinate synthase"/>
    <property type="match status" value="1"/>
</dbReference>
<dbReference type="Gene3D" id="1.10.287.400">
    <property type="match status" value="1"/>
</dbReference>
<dbReference type="Gene3D" id="3.90.1260.10">
    <property type="entry name" value="Argininosuccinate synthetase, chain A, domain 2"/>
    <property type="match status" value="1"/>
</dbReference>
<dbReference type="Gene3D" id="3.40.50.620">
    <property type="entry name" value="HUPs"/>
    <property type="match status" value="1"/>
</dbReference>
<dbReference type="HAMAP" id="MF_00581">
    <property type="entry name" value="Arg_succ_synth_type2"/>
    <property type="match status" value="1"/>
</dbReference>
<dbReference type="InterPro" id="IPR023437">
    <property type="entry name" value="Arg_succ_synth_type2_subfam"/>
</dbReference>
<dbReference type="InterPro" id="IPR048268">
    <property type="entry name" value="Arginosuc_syn_C"/>
</dbReference>
<dbReference type="InterPro" id="IPR048267">
    <property type="entry name" value="Arginosuc_syn_N"/>
</dbReference>
<dbReference type="InterPro" id="IPR001518">
    <property type="entry name" value="Arginosuc_synth"/>
</dbReference>
<dbReference type="InterPro" id="IPR018223">
    <property type="entry name" value="Arginosuc_synth_CS"/>
</dbReference>
<dbReference type="InterPro" id="IPR023434">
    <property type="entry name" value="Arginosuc_synth_type_1_subfam"/>
</dbReference>
<dbReference type="InterPro" id="IPR024074">
    <property type="entry name" value="AS_cat/multimer_dom_body"/>
</dbReference>
<dbReference type="InterPro" id="IPR024073">
    <property type="entry name" value="AS_multimer_C_tail"/>
</dbReference>
<dbReference type="InterPro" id="IPR014729">
    <property type="entry name" value="Rossmann-like_a/b/a_fold"/>
</dbReference>
<dbReference type="NCBIfam" id="TIGR00032">
    <property type="entry name" value="argG"/>
    <property type="match status" value="1"/>
</dbReference>
<dbReference type="NCBIfam" id="NF003779">
    <property type="entry name" value="PRK05370.1"/>
    <property type="match status" value="1"/>
</dbReference>
<dbReference type="PANTHER" id="PTHR11587">
    <property type="entry name" value="ARGININOSUCCINATE SYNTHASE"/>
    <property type="match status" value="1"/>
</dbReference>
<dbReference type="PANTHER" id="PTHR11587:SF2">
    <property type="entry name" value="ARGININOSUCCINATE SYNTHASE"/>
    <property type="match status" value="1"/>
</dbReference>
<dbReference type="Pfam" id="PF20979">
    <property type="entry name" value="Arginosuc_syn_C"/>
    <property type="match status" value="1"/>
</dbReference>
<dbReference type="Pfam" id="PF00764">
    <property type="entry name" value="Arginosuc_synth"/>
    <property type="match status" value="1"/>
</dbReference>
<dbReference type="SUPFAM" id="SSF52402">
    <property type="entry name" value="Adenine nucleotide alpha hydrolases-like"/>
    <property type="match status" value="1"/>
</dbReference>
<dbReference type="SUPFAM" id="SSF69864">
    <property type="entry name" value="Argininosuccinate synthetase, C-terminal domain"/>
    <property type="match status" value="1"/>
</dbReference>
<dbReference type="PROSITE" id="PS00564">
    <property type="entry name" value="ARGININOSUCCIN_SYN_1"/>
    <property type="match status" value="1"/>
</dbReference>
<dbReference type="PROSITE" id="PS00565">
    <property type="entry name" value="ARGININOSUCCIN_SYN_2"/>
    <property type="match status" value="1"/>
</dbReference>
<feature type="chain" id="PRO_1000061198" description="Argininosuccinate synthase">
    <location>
        <begin position="1"/>
        <end position="455"/>
    </location>
</feature>
<feature type="region of interest" description="Disordered" evidence="2">
    <location>
        <begin position="434"/>
        <end position="455"/>
    </location>
</feature>
<feature type="compositionally biased region" description="Polar residues" evidence="2">
    <location>
        <begin position="434"/>
        <end position="448"/>
    </location>
</feature>
<feature type="binding site" evidence="1">
    <location>
        <begin position="17"/>
        <end position="25"/>
    </location>
    <ligand>
        <name>ATP</name>
        <dbReference type="ChEBI" id="CHEBI:30616"/>
    </ligand>
</feature>
<feature type="binding site" evidence="1">
    <location>
        <position position="43"/>
    </location>
    <ligand>
        <name>ATP</name>
        <dbReference type="ChEBI" id="CHEBI:30616"/>
    </ligand>
</feature>
<feature type="binding site" evidence="1">
    <location>
        <position position="99"/>
    </location>
    <ligand>
        <name>L-citrulline</name>
        <dbReference type="ChEBI" id="CHEBI:57743"/>
    </ligand>
</feature>
<feature type="binding site" evidence="1">
    <location>
        <position position="129"/>
    </location>
    <ligand>
        <name>ATP</name>
        <dbReference type="ChEBI" id="CHEBI:30616"/>
    </ligand>
</feature>
<feature type="binding site" evidence="1">
    <location>
        <position position="131"/>
    </location>
    <ligand>
        <name>ATP</name>
        <dbReference type="ChEBI" id="CHEBI:30616"/>
    </ligand>
</feature>
<feature type="binding site" evidence="1">
    <location>
        <position position="131"/>
    </location>
    <ligand>
        <name>L-aspartate</name>
        <dbReference type="ChEBI" id="CHEBI:29991"/>
    </ligand>
</feature>
<feature type="binding site" evidence="1">
    <location>
        <position position="135"/>
    </location>
    <ligand>
        <name>L-aspartate</name>
        <dbReference type="ChEBI" id="CHEBI:29991"/>
    </ligand>
</feature>
<feature type="binding site" evidence="1">
    <location>
        <position position="135"/>
    </location>
    <ligand>
        <name>L-citrulline</name>
        <dbReference type="ChEBI" id="CHEBI:57743"/>
    </ligand>
</feature>
<feature type="binding site" evidence="1">
    <location>
        <position position="136"/>
    </location>
    <ligand>
        <name>ATP</name>
        <dbReference type="ChEBI" id="CHEBI:30616"/>
    </ligand>
</feature>
<feature type="binding site" evidence="1">
    <location>
        <position position="136"/>
    </location>
    <ligand>
        <name>L-aspartate</name>
        <dbReference type="ChEBI" id="CHEBI:29991"/>
    </ligand>
</feature>
<feature type="binding site" evidence="1">
    <location>
        <position position="139"/>
    </location>
    <ligand>
        <name>L-citrulline</name>
        <dbReference type="ChEBI" id="CHEBI:57743"/>
    </ligand>
</feature>
<feature type="binding site" evidence="1">
    <location>
        <position position="192"/>
    </location>
    <ligand>
        <name>L-citrulline</name>
        <dbReference type="ChEBI" id="CHEBI:57743"/>
    </ligand>
</feature>
<feature type="binding site" evidence="1">
    <location>
        <position position="194"/>
    </location>
    <ligand>
        <name>ATP</name>
        <dbReference type="ChEBI" id="CHEBI:30616"/>
    </ligand>
</feature>
<feature type="binding site" evidence="1">
    <location>
        <position position="201"/>
    </location>
    <ligand>
        <name>L-citrulline</name>
        <dbReference type="ChEBI" id="CHEBI:57743"/>
    </ligand>
</feature>
<feature type="binding site" evidence="1">
    <location>
        <position position="203"/>
    </location>
    <ligand>
        <name>L-citrulline</name>
        <dbReference type="ChEBI" id="CHEBI:57743"/>
    </ligand>
</feature>
<feature type="binding site" evidence="1">
    <location>
        <position position="280"/>
    </location>
    <ligand>
        <name>L-citrulline</name>
        <dbReference type="ChEBI" id="CHEBI:57743"/>
    </ligand>
</feature>
<reference key="1">
    <citation type="journal article" date="2007" name="PLoS Genet.">
        <title>The complete genome sequence of Yersinia pseudotuberculosis IP31758, the causative agent of Far East scarlet-like fever.</title>
        <authorList>
            <person name="Eppinger M."/>
            <person name="Rosovitz M.J."/>
            <person name="Fricke W.F."/>
            <person name="Rasko D.A."/>
            <person name="Kokorina G."/>
            <person name="Fayolle C."/>
            <person name="Lindler L.E."/>
            <person name="Carniel E."/>
            <person name="Ravel J."/>
        </authorList>
    </citation>
    <scope>NUCLEOTIDE SEQUENCE [LARGE SCALE GENOMIC DNA]</scope>
    <source>
        <strain>IP 31758</strain>
    </source>
</reference>
<comment type="catalytic activity">
    <reaction evidence="1">
        <text>L-citrulline + L-aspartate + ATP = 2-(N(omega)-L-arginino)succinate + AMP + diphosphate + H(+)</text>
        <dbReference type="Rhea" id="RHEA:10932"/>
        <dbReference type="ChEBI" id="CHEBI:15378"/>
        <dbReference type="ChEBI" id="CHEBI:29991"/>
        <dbReference type="ChEBI" id="CHEBI:30616"/>
        <dbReference type="ChEBI" id="CHEBI:33019"/>
        <dbReference type="ChEBI" id="CHEBI:57472"/>
        <dbReference type="ChEBI" id="CHEBI:57743"/>
        <dbReference type="ChEBI" id="CHEBI:456215"/>
        <dbReference type="EC" id="6.3.4.5"/>
    </reaction>
</comment>
<comment type="pathway">
    <text evidence="1">Amino-acid biosynthesis; L-arginine biosynthesis; L-arginine from L-ornithine and carbamoyl phosphate: step 2/3.</text>
</comment>
<comment type="subunit">
    <text evidence="1">Homotetramer.</text>
</comment>
<comment type="subcellular location">
    <subcellularLocation>
        <location evidence="1">Cytoplasm</location>
    </subcellularLocation>
</comment>
<comment type="similarity">
    <text evidence="1">Belongs to the argininosuccinate synthase family. Type 2 subfamily.</text>
</comment>
<name>ASSY_YERP3</name>
<organism>
    <name type="scientific">Yersinia pseudotuberculosis serotype O:1b (strain IP 31758)</name>
    <dbReference type="NCBI Taxonomy" id="349747"/>
    <lineage>
        <taxon>Bacteria</taxon>
        <taxon>Pseudomonadati</taxon>
        <taxon>Pseudomonadota</taxon>
        <taxon>Gammaproteobacteria</taxon>
        <taxon>Enterobacterales</taxon>
        <taxon>Yersiniaceae</taxon>
        <taxon>Yersinia</taxon>
    </lineage>
</organism>
<evidence type="ECO:0000255" key="1">
    <source>
        <dbReference type="HAMAP-Rule" id="MF_00581"/>
    </source>
</evidence>
<evidence type="ECO:0000256" key="2">
    <source>
        <dbReference type="SAM" id="MobiDB-lite"/>
    </source>
</evidence>
<accession>A7FJE9</accession>
<proteinExistence type="inferred from homology"/>